<evidence type="ECO:0000250" key="1"/>
<evidence type="ECO:0000255" key="2">
    <source>
        <dbReference type="PROSITE-ProRule" id="PRU00286"/>
    </source>
</evidence>
<evidence type="ECO:0000305" key="3"/>
<proteinExistence type="inferred from homology"/>
<accession>P95694</accession>
<protein>
    <recommendedName>
        <fullName>Chaperone protein DnaJ</fullName>
    </recommendedName>
</protein>
<name>DNAJ_STRAG</name>
<keyword id="KW-0143">Chaperone</keyword>
<keyword id="KW-0963">Cytoplasm</keyword>
<keyword id="KW-0235">DNA replication</keyword>
<keyword id="KW-0479">Metal-binding</keyword>
<keyword id="KW-0677">Repeat</keyword>
<keyword id="KW-0346">Stress response</keyword>
<keyword id="KW-0862">Zinc</keyword>
<feature type="chain" id="PRO_0000070893" description="Chaperone protein DnaJ">
    <location>
        <begin position="1"/>
        <end position="24" status="greater than"/>
    </location>
</feature>
<feature type="domain" description="J" evidence="2">
    <location>
        <begin position="3"/>
        <end position="24" status="greater than"/>
    </location>
</feature>
<feature type="non-terminal residue">
    <location>
        <position position="24"/>
    </location>
</feature>
<dbReference type="EMBL" id="U72719">
    <property type="protein sequence ID" value="AAB39220.1"/>
    <property type="molecule type" value="Genomic_DNA"/>
</dbReference>
<dbReference type="GO" id="GO:0005737">
    <property type="term" value="C:cytoplasm"/>
    <property type="evidence" value="ECO:0007669"/>
    <property type="project" value="UniProtKB-SubCell"/>
</dbReference>
<dbReference type="GO" id="GO:0046872">
    <property type="term" value="F:metal ion binding"/>
    <property type="evidence" value="ECO:0007669"/>
    <property type="project" value="UniProtKB-KW"/>
</dbReference>
<dbReference type="GO" id="GO:0006260">
    <property type="term" value="P:DNA replication"/>
    <property type="evidence" value="ECO:0007669"/>
    <property type="project" value="UniProtKB-KW"/>
</dbReference>
<dbReference type="Gene3D" id="1.10.287.110">
    <property type="entry name" value="DnaJ domain"/>
    <property type="match status" value="1"/>
</dbReference>
<dbReference type="InterPro" id="IPR036869">
    <property type="entry name" value="J_dom_sf"/>
</dbReference>
<dbReference type="SUPFAM" id="SSF46565">
    <property type="entry name" value="Chaperone J-domain"/>
    <property type="match status" value="1"/>
</dbReference>
<gene>
    <name type="primary">dnaJ</name>
</gene>
<comment type="function">
    <text evidence="1">Participates actively in the response to hyperosmotic and heat shock by preventing the aggregation of stress-denatured proteins and by disaggregating proteins, also in an autonomous, DnaK-independent fashion. Unfolded proteins bind initially to DnaJ; upon interaction with the DnaJ-bound protein, DnaK hydrolyzes its bound ATP, resulting in the formation of a stable complex. GrpE releases ADP from DnaK; ATP binding to DnaK triggers the release of the substrate protein, thus completing the reaction cycle. Several rounds of ATP-dependent interactions between DnaJ, DnaK and GrpE are required for fully efficient folding. Also involved, together with DnaK and GrpE, in the DNA replication of plasmids through activation of initiation proteins (By similarity).</text>
</comment>
<comment type="cofactor">
    <cofactor evidence="1">
        <name>Zn(2+)</name>
        <dbReference type="ChEBI" id="CHEBI:29105"/>
    </cofactor>
    <text evidence="1">Binds 2 Zn(2+) ions per monomer.</text>
</comment>
<comment type="subunit">
    <text evidence="1">Homodimer.</text>
</comment>
<comment type="subcellular location">
    <subcellularLocation>
        <location evidence="1">Cytoplasm</location>
    </subcellularLocation>
</comment>
<comment type="domain">
    <text evidence="1">The J domain is necessary and sufficient to stimulate DnaK ATPase activity. Zinc center 1 plays an important role in the autonomous, DnaK-independent chaperone activity of DnaJ. Zinc center 2 is essential for interaction with DnaK and for DnaJ activity (By similarity).</text>
</comment>
<comment type="similarity">
    <text evidence="3">Belongs to the DnaJ family.</text>
</comment>
<organism>
    <name type="scientific">Streptococcus agalactiae</name>
    <dbReference type="NCBI Taxonomy" id="1311"/>
    <lineage>
        <taxon>Bacteria</taxon>
        <taxon>Bacillati</taxon>
        <taxon>Bacillota</taxon>
        <taxon>Bacilli</taxon>
        <taxon>Lactobacillales</taxon>
        <taxon>Streptococcaceae</taxon>
        <taxon>Streptococcus</taxon>
    </lineage>
</organism>
<reference key="1">
    <citation type="submission" date="1996-09" db="EMBL/GenBank/DDBJ databases">
        <title>Heat shock protein HSP70 and amino terminus of DnaJ of Streptococcus agalactiae.</title>
        <authorList>
            <person name="Rioux C.R."/>
            <person name="Martin D."/>
            <person name="Hamel J."/>
            <person name="Brodeur B.R."/>
        </authorList>
    </citation>
    <scope>NUCLEOTIDE SEQUENCE [GENOMIC DNA]</scope>
</reference>
<sequence length="24" mass="2760">MNNTEFYDRLGVSKDASQDEIKKA</sequence>